<evidence type="ECO:0000255" key="1">
    <source>
        <dbReference type="HAMAP-Rule" id="MF_01603"/>
    </source>
</evidence>
<name>HLDE_RHORT</name>
<gene>
    <name evidence="1" type="primary">hldE</name>
    <name type="ordered locus">Rru_A0123</name>
</gene>
<comment type="function">
    <text evidence="1">Catalyzes the phosphorylation of D-glycero-D-manno-heptose 7-phosphate at the C-1 position to selectively form D-glycero-beta-D-manno-heptose-1,7-bisphosphate.</text>
</comment>
<comment type="function">
    <text evidence="1">Catalyzes the ADP transfer from ATP to D-glycero-beta-D-manno-heptose 1-phosphate, yielding ADP-D-glycero-beta-D-manno-heptose.</text>
</comment>
<comment type="catalytic activity">
    <reaction evidence="1">
        <text>D-glycero-beta-D-manno-heptose 7-phosphate + ATP = D-glycero-beta-D-manno-heptose 1,7-bisphosphate + ADP + H(+)</text>
        <dbReference type="Rhea" id="RHEA:27473"/>
        <dbReference type="ChEBI" id="CHEBI:15378"/>
        <dbReference type="ChEBI" id="CHEBI:30616"/>
        <dbReference type="ChEBI" id="CHEBI:60204"/>
        <dbReference type="ChEBI" id="CHEBI:60208"/>
        <dbReference type="ChEBI" id="CHEBI:456216"/>
        <dbReference type="EC" id="2.7.1.167"/>
    </reaction>
</comment>
<comment type="catalytic activity">
    <reaction evidence="1">
        <text>D-glycero-beta-D-manno-heptose 1-phosphate + ATP + H(+) = ADP-D-glycero-beta-D-manno-heptose + diphosphate</text>
        <dbReference type="Rhea" id="RHEA:27465"/>
        <dbReference type="ChEBI" id="CHEBI:15378"/>
        <dbReference type="ChEBI" id="CHEBI:30616"/>
        <dbReference type="ChEBI" id="CHEBI:33019"/>
        <dbReference type="ChEBI" id="CHEBI:59967"/>
        <dbReference type="ChEBI" id="CHEBI:61593"/>
        <dbReference type="EC" id="2.7.7.70"/>
    </reaction>
</comment>
<comment type="pathway">
    <text evidence="1">Nucleotide-sugar biosynthesis; ADP-L-glycero-beta-D-manno-heptose biosynthesis; ADP-L-glycero-beta-D-manno-heptose from D-glycero-beta-D-manno-heptose 7-phosphate: step 1/4.</text>
</comment>
<comment type="pathway">
    <text evidence="1">Nucleotide-sugar biosynthesis; ADP-L-glycero-beta-D-manno-heptose biosynthesis; ADP-L-glycero-beta-D-manno-heptose from D-glycero-beta-D-manno-heptose 7-phosphate: step 3/4.</text>
</comment>
<comment type="subunit">
    <text evidence="1">Homodimer.</text>
</comment>
<comment type="similarity">
    <text evidence="1">In the N-terminal section; belongs to the carbohydrate kinase PfkB family.</text>
</comment>
<comment type="similarity">
    <text evidence="1">In the C-terminal section; belongs to the cytidylyltransferase family.</text>
</comment>
<feature type="chain" id="PRO_0000255779" description="Bifunctional protein HldE">
    <location>
        <begin position="1"/>
        <end position="496"/>
    </location>
</feature>
<feature type="region of interest" description="Ribokinase">
    <location>
        <begin position="1"/>
        <end position="331"/>
    </location>
</feature>
<feature type="region of interest" description="Cytidylyltransferase">
    <location>
        <begin position="358"/>
        <end position="496"/>
    </location>
</feature>
<feature type="active site" evidence="1">
    <location>
        <position position="276"/>
    </location>
</feature>
<feature type="binding site" evidence="1">
    <location>
        <begin position="206"/>
        <end position="209"/>
    </location>
    <ligand>
        <name>ATP</name>
        <dbReference type="ChEBI" id="CHEBI:30616"/>
    </ligand>
</feature>
<protein>
    <recommendedName>
        <fullName evidence="1">Bifunctional protein HldE</fullName>
    </recommendedName>
    <domain>
        <recommendedName>
            <fullName evidence="1">D-beta-D-heptose 7-phosphate kinase</fullName>
            <ecNumber evidence="1">2.7.1.167</ecNumber>
        </recommendedName>
        <alternativeName>
            <fullName evidence="1">D-beta-D-heptose 7-phosphotransferase</fullName>
        </alternativeName>
        <alternativeName>
            <fullName evidence="1">D-glycero-beta-D-manno-heptose-7-phosphate kinase</fullName>
        </alternativeName>
    </domain>
    <domain>
        <recommendedName>
            <fullName evidence="1">D-beta-D-heptose 1-phosphate adenylyltransferase</fullName>
            <ecNumber evidence="1">2.7.7.70</ecNumber>
        </recommendedName>
        <alternativeName>
            <fullName evidence="1">D-glycero-beta-D-manno-heptose 1-phosphate adenylyltransferase</fullName>
        </alternativeName>
    </domain>
</protein>
<organism>
    <name type="scientific">Rhodospirillum rubrum (strain ATCC 11170 / ATH 1.1.1 / DSM 467 / LMG 4362 / NCIMB 8255 / S1)</name>
    <dbReference type="NCBI Taxonomy" id="269796"/>
    <lineage>
        <taxon>Bacteria</taxon>
        <taxon>Pseudomonadati</taxon>
        <taxon>Pseudomonadota</taxon>
        <taxon>Alphaproteobacteria</taxon>
        <taxon>Rhodospirillales</taxon>
        <taxon>Rhodospirillaceae</taxon>
        <taxon>Rhodospirillum</taxon>
    </lineage>
</organism>
<proteinExistence type="inferred from homology"/>
<reference key="1">
    <citation type="journal article" date="2011" name="Stand. Genomic Sci.">
        <title>Complete genome sequence of Rhodospirillum rubrum type strain (S1).</title>
        <authorList>
            <person name="Munk A.C."/>
            <person name="Copeland A."/>
            <person name="Lucas S."/>
            <person name="Lapidus A."/>
            <person name="Del Rio T.G."/>
            <person name="Barry K."/>
            <person name="Detter J.C."/>
            <person name="Hammon N."/>
            <person name="Israni S."/>
            <person name="Pitluck S."/>
            <person name="Brettin T."/>
            <person name="Bruce D."/>
            <person name="Han C."/>
            <person name="Tapia R."/>
            <person name="Gilna P."/>
            <person name="Schmutz J."/>
            <person name="Larimer F."/>
            <person name="Land M."/>
            <person name="Kyrpides N.C."/>
            <person name="Mavromatis K."/>
            <person name="Richardson P."/>
            <person name="Rohde M."/>
            <person name="Goeker M."/>
            <person name="Klenk H.P."/>
            <person name="Zhang Y."/>
            <person name="Roberts G.P."/>
            <person name="Reslewic S."/>
            <person name="Schwartz D.C."/>
        </authorList>
    </citation>
    <scope>NUCLEOTIDE SEQUENCE [LARGE SCALE GENOMIC DNA]</scope>
    <source>
        <strain>ATCC 11170 / ATH 1.1.1 / DSM 467 / LMG 4362 / NCIMB 8255 / S1</strain>
    </source>
</reference>
<dbReference type="EC" id="2.7.1.167" evidence="1"/>
<dbReference type="EC" id="2.7.7.70" evidence="1"/>
<dbReference type="EMBL" id="CP000230">
    <property type="protein sequence ID" value="ABC20928.1"/>
    <property type="molecule type" value="Genomic_DNA"/>
</dbReference>
<dbReference type="RefSeq" id="YP_425215.1">
    <property type="nucleotide sequence ID" value="NC_007643.1"/>
</dbReference>
<dbReference type="SMR" id="Q2RY67"/>
<dbReference type="STRING" id="269796.Rru_A0123"/>
<dbReference type="EnsemblBacteria" id="ABC20928">
    <property type="protein sequence ID" value="ABC20928"/>
    <property type="gene ID" value="Rru_A0123"/>
</dbReference>
<dbReference type="KEGG" id="rru:Rru_A0123"/>
<dbReference type="PATRIC" id="fig|269796.9.peg.177"/>
<dbReference type="eggNOG" id="COG0615">
    <property type="taxonomic scope" value="Bacteria"/>
</dbReference>
<dbReference type="eggNOG" id="COG2870">
    <property type="taxonomic scope" value="Bacteria"/>
</dbReference>
<dbReference type="HOGENOM" id="CLU_021150_2_1_5"/>
<dbReference type="PhylomeDB" id="Q2RY67"/>
<dbReference type="UniPathway" id="UPA00356">
    <property type="reaction ID" value="UER00437"/>
</dbReference>
<dbReference type="UniPathway" id="UPA00356">
    <property type="reaction ID" value="UER00439"/>
</dbReference>
<dbReference type="Proteomes" id="UP000001929">
    <property type="component" value="Chromosome"/>
</dbReference>
<dbReference type="GO" id="GO:0005829">
    <property type="term" value="C:cytosol"/>
    <property type="evidence" value="ECO:0007669"/>
    <property type="project" value="TreeGrafter"/>
</dbReference>
<dbReference type="GO" id="GO:0005524">
    <property type="term" value="F:ATP binding"/>
    <property type="evidence" value="ECO:0007669"/>
    <property type="project" value="UniProtKB-UniRule"/>
</dbReference>
<dbReference type="GO" id="GO:0033785">
    <property type="term" value="F:heptose 7-phosphate kinase activity"/>
    <property type="evidence" value="ECO:0007669"/>
    <property type="project" value="UniProtKB-UniRule"/>
</dbReference>
<dbReference type="GO" id="GO:0033786">
    <property type="term" value="F:heptose-1-phosphate adenylyltransferase activity"/>
    <property type="evidence" value="ECO:0007669"/>
    <property type="project" value="UniProtKB-UniRule"/>
</dbReference>
<dbReference type="GO" id="GO:0016773">
    <property type="term" value="F:phosphotransferase activity, alcohol group as acceptor"/>
    <property type="evidence" value="ECO:0007669"/>
    <property type="project" value="InterPro"/>
</dbReference>
<dbReference type="GO" id="GO:0097171">
    <property type="term" value="P:ADP-L-glycero-beta-D-manno-heptose biosynthetic process"/>
    <property type="evidence" value="ECO:0007669"/>
    <property type="project" value="UniProtKB-UniPathway"/>
</dbReference>
<dbReference type="CDD" id="cd01172">
    <property type="entry name" value="RfaE_like"/>
    <property type="match status" value="1"/>
</dbReference>
<dbReference type="FunFam" id="3.40.1190.20:FF:000002">
    <property type="entry name" value="Bifunctional protein HldE"/>
    <property type="match status" value="1"/>
</dbReference>
<dbReference type="Gene3D" id="3.40.1190.20">
    <property type="match status" value="1"/>
</dbReference>
<dbReference type="Gene3D" id="3.40.50.620">
    <property type="entry name" value="HUPs"/>
    <property type="match status" value="1"/>
</dbReference>
<dbReference type="HAMAP" id="MF_01603">
    <property type="entry name" value="HldE"/>
    <property type="match status" value="1"/>
</dbReference>
<dbReference type="InterPro" id="IPR023030">
    <property type="entry name" value="Bifunc_HldE"/>
</dbReference>
<dbReference type="InterPro" id="IPR004821">
    <property type="entry name" value="Cyt_trans-like"/>
</dbReference>
<dbReference type="InterPro" id="IPR011611">
    <property type="entry name" value="PfkB_dom"/>
</dbReference>
<dbReference type="InterPro" id="IPR011913">
    <property type="entry name" value="RfaE_dom_I"/>
</dbReference>
<dbReference type="InterPro" id="IPR011914">
    <property type="entry name" value="RfaE_dom_II"/>
</dbReference>
<dbReference type="InterPro" id="IPR029056">
    <property type="entry name" value="Ribokinase-like"/>
</dbReference>
<dbReference type="InterPro" id="IPR014729">
    <property type="entry name" value="Rossmann-like_a/b/a_fold"/>
</dbReference>
<dbReference type="NCBIfam" id="TIGR00125">
    <property type="entry name" value="cyt_tran_rel"/>
    <property type="match status" value="1"/>
</dbReference>
<dbReference type="NCBIfam" id="TIGR02198">
    <property type="entry name" value="rfaE_dom_I"/>
    <property type="match status" value="1"/>
</dbReference>
<dbReference type="NCBIfam" id="TIGR02199">
    <property type="entry name" value="rfaE_dom_II"/>
    <property type="match status" value="1"/>
</dbReference>
<dbReference type="PANTHER" id="PTHR46969">
    <property type="entry name" value="BIFUNCTIONAL PROTEIN HLDE"/>
    <property type="match status" value="1"/>
</dbReference>
<dbReference type="PANTHER" id="PTHR46969:SF1">
    <property type="entry name" value="BIFUNCTIONAL PROTEIN HLDE"/>
    <property type="match status" value="1"/>
</dbReference>
<dbReference type="Pfam" id="PF01467">
    <property type="entry name" value="CTP_transf_like"/>
    <property type="match status" value="1"/>
</dbReference>
<dbReference type="Pfam" id="PF00294">
    <property type="entry name" value="PfkB"/>
    <property type="match status" value="1"/>
</dbReference>
<dbReference type="SUPFAM" id="SSF52374">
    <property type="entry name" value="Nucleotidylyl transferase"/>
    <property type="match status" value="1"/>
</dbReference>
<dbReference type="SUPFAM" id="SSF53613">
    <property type="entry name" value="Ribokinase-like"/>
    <property type="match status" value="1"/>
</dbReference>
<accession>Q2RY67</accession>
<sequence length="496" mass="51889">MDPTPALAEIVASLARVRVLCVGDVMLDRFVRGDVERISPEAPIPIVRVRDERAMLGGAGNVVRNIVALGGRCAFMAVIGEDRAGAEIGGLLGDEHKVDSFIGIQPNRRTSVKTRFFAGSQQLLRADDETIAPLDPYDADRLLGDVRSQITTVGALVLSDYGKGVLDGPVAASLIAMGRTQNLPVIVDPKGRDFTRYRGATVLTPNRKELAEATGLPTGTDDEVVTACRQVIARCGVDTVLATRSQDGMTLVGADGSVLHLPAEAREVYDVSGAGDTVVATLAAALAGGAPLAVACRLANLAAGIVVGRVGTAAVPAADLMAAVHQEEVSARDSKIVGAEDAREVVDKWRRHGLRIGFTNGCFDLLHPGHVSLLRQARAACDRLVVGLNSDASVRRLKGDSRPVQDETARAIVLASLADVDLVAVFGEDTPLGLITTLLPDVLVKGADYTVDTVVGSDVVLTNGGRVLLADLKAGFSTTSTIARLHGGSRRSGDTL</sequence>
<keyword id="KW-0067">ATP-binding</keyword>
<keyword id="KW-0119">Carbohydrate metabolism</keyword>
<keyword id="KW-0418">Kinase</keyword>
<keyword id="KW-0511">Multifunctional enzyme</keyword>
<keyword id="KW-0547">Nucleotide-binding</keyword>
<keyword id="KW-0548">Nucleotidyltransferase</keyword>
<keyword id="KW-1185">Reference proteome</keyword>
<keyword id="KW-0808">Transferase</keyword>